<comment type="function">
    <text evidence="1">Converts heme B (protoheme IX) to heme O by substitution of the vinyl group on carbon 2 of heme B porphyrin ring with a hydroxyethyl farnesyl side group.</text>
</comment>
<comment type="catalytic activity">
    <reaction evidence="1">
        <text>heme b + (2E,6E)-farnesyl diphosphate + H2O = Fe(II)-heme o + diphosphate</text>
        <dbReference type="Rhea" id="RHEA:28070"/>
        <dbReference type="ChEBI" id="CHEBI:15377"/>
        <dbReference type="ChEBI" id="CHEBI:33019"/>
        <dbReference type="ChEBI" id="CHEBI:60344"/>
        <dbReference type="ChEBI" id="CHEBI:60530"/>
        <dbReference type="ChEBI" id="CHEBI:175763"/>
        <dbReference type="EC" id="2.5.1.141"/>
    </reaction>
</comment>
<comment type="pathway">
    <text evidence="1">Porphyrin-containing compound metabolism; heme O biosynthesis; heme O from protoheme: step 1/1.</text>
</comment>
<comment type="subcellular location">
    <subcellularLocation>
        <location evidence="1">Cell inner membrane</location>
        <topology evidence="1">Multi-pass membrane protein</topology>
    </subcellularLocation>
</comment>
<comment type="miscellaneous">
    <text evidence="1">Carbon 2 of the heme B porphyrin ring is defined according to the Fischer nomenclature.</text>
</comment>
<comment type="similarity">
    <text evidence="1">Belongs to the UbiA prenyltransferase family. Protoheme IX farnesyltransferase subfamily.</text>
</comment>
<reference key="1">
    <citation type="journal article" date="2009" name="J. Bacteriol.">
        <title>Genome sequence of Azotobacter vinelandii, an obligate aerobe specialized to support diverse anaerobic metabolic processes.</title>
        <authorList>
            <person name="Setubal J.C."/>
            <person name="Dos Santos P."/>
            <person name="Goldman B.S."/>
            <person name="Ertesvaag H."/>
            <person name="Espin G."/>
            <person name="Rubio L.M."/>
            <person name="Valla S."/>
            <person name="Almeida N.F."/>
            <person name="Balasubramanian D."/>
            <person name="Cromes L."/>
            <person name="Curatti L."/>
            <person name="Du Z."/>
            <person name="Godsy E."/>
            <person name="Goodner B."/>
            <person name="Hellner-Burris K."/>
            <person name="Hernandez J.A."/>
            <person name="Houmiel K."/>
            <person name="Imperial J."/>
            <person name="Kennedy C."/>
            <person name="Larson T.J."/>
            <person name="Latreille P."/>
            <person name="Ligon L.S."/>
            <person name="Lu J."/>
            <person name="Maerk M."/>
            <person name="Miller N.M."/>
            <person name="Norton S."/>
            <person name="O'Carroll I.P."/>
            <person name="Paulsen I."/>
            <person name="Raulfs E.C."/>
            <person name="Roemer R."/>
            <person name="Rosser J."/>
            <person name="Segura D."/>
            <person name="Slater S."/>
            <person name="Stricklin S.L."/>
            <person name="Studholme D.J."/>
            <person name="Sun J."/>
            <person name="Viana C.J."/>
            <person name="Wallin E."/>
            <person name="Wang B."/>
            <person name="Wheeler C."/>
            <person name="Zhu H."/>
            <person name="Dean D.R."/>
            <person name="Dixon R."/>
            <person name="Wood D."/>
        </authorList>
    </citation>
    <scope>NUCLEOTIDE SEQUENCE [LARGE SCALE GENOMIC DNA]</scope>
    <source>
        <strain>DJ / ATCC BAA-1303</strain>
    </source>
</reference>
<gene>
    <name evidence="1" type="primary">cyoE</name>
    <name type="ordered locus">Avin_00940</name>
</gene>
<keyword id="KW-0997">Cell inner membrane</keyword>
<keyword id="KW-1003">Cell membrane</keyword>
<keyword id="KW-0350">Heme biosynthesis</keyword>
<keyword id="KW-0472">Membrane</keyword>
<keyword id="KW-0808">Transferase</keyword>
<keyword id="KW-0812">Transmembrane</keyword>
<keyword id="KW-1133">Transmembrane helix</keyword>
<accession>C1DG34</accession>
<protein>
    <recommendedName>
        <fullName evidence="1">Protoheme IX farnesyltransferase</fullName>
        <ecNumber evidence="1">2.5.1.141</ecNumber>
    </recommendedName>
    <alternativeName>
        <fullName evidence="1">Heme B farnesyltransferase</fullName>
    </alternativeName>
    <alternativeName>
        <fullName evidence="1">Heme O synthase</fullName>
    </alternativeName>
</protein>
<organism>
    <name type="scientific">Azotobacter vinelandii (strain DJ / ATCC BAA-1303)</name>
    <dbReference type="NCBI Taxonomy" id="322710"/>
    <lineage>
        <taxon>Bacteria</taxon>
        <taxon>Pseudomonadati</taxon>
        <taxon>Pseudomonadota</taxon>
        <taxon>Gammaproteobacteria</taxon>
        <taxon>Pseudomonadales</taxon>
        <taxon>Pseudomonadaceae</taxon>
        <taxon>Azotobacter</taxon>
    </lineage>
</organism>
<proteinExistence type="inferred from homology"/>
<evidence type="ECO:0000255" key="1">
    <source>
        <dbReference type="HAMAP-Rule" id="MF_00154"/>
    </source>
</evidence>
<sequence length="299" mass="32481">MATLLATRGNRATWRDYLELTKPKVVVLMLITSLVGMFLASRAGVPWTVLLFGNLGIGLCAGAAAAVNHVVDRRIDALMARTRRRPLAEGRVAPLAALGFALALAVAGMALLLTFTNPLAAWLTLASLLGYAVLYTGFLKRATPQNIVIGGLAGAAPPLLGWVAVSGQLSAEPLLLVLIVFTWTPPHFWALAIHRKAEYAKAEIPMLPVTHGEAYTKLHILLYTLALLAVTLLPYAIHMSGPLYLLCALLLGGRFLHWAWALYKDSKPHAAIGTFKYSIRYLFLLFIALLVDHYLPLTL</sequence>
<dbReference type="EC" id="2.5.1.141" evidence="1"/>
<dbReference type="EMBL" id="CP001157">
    <property type="protein sequence ID" value="ACO76361.1"/>
    <property type="molecule type" value="Genomic_DNA"/>
</dbReference>
<dbReference type="RefSeq" id="WP_012698789.1">
    <property type="nucleotide sequence ID" value="NC_012560.1"/>
</dbReference>
<dbReference type="SMR" id="C1DG34"/>
<dbReference type="STRING" id="322710.Avin_00940"/>
<dbReference type="EnsemblBacteria" id="ACO76361">
    <property type="protein sequence ID" value="ACO76361"/>
    <property type="gene ID" value="Avin_00940"/>
</dbReference>
<dbReference type="GeneID" id="88183565"/>
<dbReference type="KEGG" id="avn:Avin_00940"/>
<dbReference type="eggNOG" id="COG0109">
    <property type="taxonomic scope" value="Bacteria"/>
</dbReference>
<dbReference type="HOGENOM" id="CLU_029631_0_2_6"/>
<dbReference type="OrthoDB" id="9814417at2"/>
<dbReference type="UniPathway" id="UPA00834">
    <property type="reaction ID" value="UER00712"/>
</dbReference>
<dbReference type="Proteomes" id="UP000002424">
    <property type="component" value="Chromosome"/>
</dbReference>
<dbReference type="GO" id="GO:0005886">
    <property type="term" value="C:plasma membrane"/>
    <property type="evidence" value="ECO:0007669"/>
    <property type="project" value="UniProtKB-SubCell"/>
</dbReference>
<dbReference type="GO" id="GO:0008495">
    <property type="term" value="F:protoheme IX farnesyltransferase activity"/>
    <property type="evidence" value="ECO:0007669"/>
    <property type="project" value="UniProtKB-UniRule"/>
</dbReference>
<dbReference type="GO" id="GO:0048034">
    <property type="term" value="P:heme O biosynthetic process"/>
    <property type="evidence" value="ECO:0007669"/>
    <property type="project" value="UniProtKB-UniRule"/>
</dbReference>
<dbReference type="CDD" id="cd13957">
    <property type="entry name" value="PT_UbiA_Cox10"/>
    <property type="match status" value="1"/>
</dbReference>
<dbReference type="FunFam" id="1.10.357.140:FF:000001">
    <property type="entry name" value="Protoheme IX farnesyltransferase"/>
    <property type="match status" value="1"/>
</dbReference>
<dbReference type="Gene3D" id="1.10.357.140">
    <property type="entry name" value="UbiA prenyltransferase"/>
    <property type="match status" value="1"/>
</dbReference>
<dbReference type="HAMAP" id="MF_00154">
    <property type="entry name" value="CyoE_CtaB"/>
    <property type="match status" value="1"/>
</dbReference>
<dbReference type="InterPro" id="IPR006369">
    <property type="entry name" value="Protohaem_IX_farnesylTrfase"/>
</dbReference>
<dbReference type="InterPro" id="IPR000537">
    <property type="entry name" value="UbiA_prenyltransferase"/>
</dbReference>
<dbReference type="InterPro" id="IPR030470">
    <property type="entry name" value="UbiA_prenylTrfase_CS"/>
</dbReference>
<dbReference type="InterPro" id="IPR044878">
    <property type="entry name" value="UbiA_sf"/>
</dbReference>
<dbReference type="NCBIfam" id="TIGR01473">
    <property type="entry name" value="cyoE_ctaB"/>
    <property type="match status" value="1"/>
</dbReference>
<dbReference type="NCBIfam" id="NF003349">
    <property type="entry name" value="PRK04375.1-2"/>
    <property type="match status" value="1"/>
</dbReference>
<dbReference type="PANTHER" id="PTHR43448:SF7">
    <property type="entry name" value="4-HYDROXYBENZOATE SOLANESYLTRANSFERASE"/>
    <property type="match status" value="1"/>
</dbReference>
<dbReference type="PANTHER" id="PTHR43448">
    <property type="entry name" value="PROTOHEME IX FARNESYLTRANSFERASE, MITOCHONDRIAL"/>
    <property type="match status" value="1"/>
</dbReference>
<dbReference type="Pfam" id="PF01040">
    <property type="entry name" value="UbiA"/>
    <property type="match status" value="1"/>
</dbReference>
<dbReference type="PROSITE" id="PS00943">
    <property type="entry name" value="UBIA"/>
    <property type="match status" value="1"/>
</dbReference>
<feature type="chain" id="PRO_1000203451" description="Protoheme IX farnesyltransferase">
    <location>
        <begin position="1"/>
        <end position="299"/>
    </location>
</feature>
<feature type="transmembrane region" description="Helical" evidence="1">
    <location>
        <begin position="25"/>
        <end position="45"/>
    </location>
</feature>
<feature type="transmembrane region" description="Helical" evidence="1">
    <location>
        <begin position="47"/>
        <end position="67"/>
    </location>
</feature>
<feature type="transmembrane region" description="Helical" evidence="1">
    <location>
        <begin position="95"/>
        <end position="115"/>
    </location>
</feature>
<feature type="transmembrane region" description="Helical" evidence="1">
    <location>
        <begin position="119"/>
        <end position="139"/>
    </location>
</feature>
<feature type="transmembrane region" description="Helical" evidence="1">
    <location>
        <begin position="147"/>
        <end position="167"/>
    </location>
</feature>
<feature type="transmembrane region" description="Helical" evidence="1">
    <location>
        <begin position="173"/>
        <end position="193"/>
    </location>
</feature>
<feature type="transmembrane region" description="Helical" evidence="1">
    <location>
        <begin position="218"/>
        <end position="238"/>
    </location>
</feature>
<feature type="transmembrane region" description="Helical" evidence="1">
    <location>
        <begin position="243"/>
        <end position="263"/>
    </location>
</feature>
<feature type="transmembrane region" description="Helical" evidence="1">
    <location>
        <begin position="279"/>
        <end position="299"/>
    </location>
</feature>
<name>CYOE_AZOVD</name>